<feature type="chain" id="PRO_0000383696" description="Probable cytosolic Fe-S cluster assembly factor AAEL012261">
    <location>
        <begin position="1"/>
        <end position="478"/>
    </location>
</feature>
<feature type="binding site" evidence="2">
    <location>
        <position position="23"/>
    </location>
    <ligand>
        <name>[4Fe-4S] cluster</name>
        <dbReference type="ChEBI" id="CHEBI:49883"/>
        <label>1</label>
    </ligand>
</feature>
<feature type="binding site" evidence="2">
    <location>
        <position position="69"/>
    </location>
    <ligand>
        <name>[4Fe-4S] cluster</name>
        <dbReference type="ChEBI" id="CHEBI:49883"/>
        <label>1</label>
    </ligand>
</feature>
<feature type="binding site" evidence="2">
    <location>
        <position position="72"/>
    </location>
    <ligand>
        <name>[4Fe-4S] cluster</name>
        <dbReference type="ChEBI" id="CHEBI:49883"/>
        <label>1</label>
    </ligand>
</feature>
<feature type="binding site" evidence="2">
    <location>
        <position position="75"/>
    </location>
    <ligand>
        <name>[4Fe-4S] cluster</name>
        <dbReference type="ChEBI" id="CHEBI:49883"/>
        <label>1</label>
    </ligand>
</feature>
<feature type="binding site" evidence="2">
    <location>
        <position position="189"/>
    </location>
    <ligand>
        <name>[4Fe-4S] cluster</name>
        <dbReference type="ChEBI" id="CHEBI:49883"/>
        <label>2</label>
    </ligand>
</feature>
<feature type="binding site" evidence="2">
    <location>
        <position position="245"/>
    </location>
    <ligand>
        <name>[4Fe-4S] cluster</name>
        <dbReference type="ChEBI" id="CHEBI:49883"/>
        <label>2</label>
    </ligand>
</feature>
<feature type="binding site" evidence="2">
    <location>
        <position position="396"/>
    </location>
    <ligand>
        <name>[4Fe-4S] cluster</name>
        <dbReference type="ChEBI" id="CHEBI:49883"/>
        <label>2</label>
    </ligand>
</feature>
<feature type="binding site" evidence="2">
    <location>
        <position position="400"/>
    </location>
    <ligand>
        <name>[4Fe-4S] cluster</name>
        <dbReference type="ChEBI" id="CHEBI:49883"/>
        <label>2</label>
    </ligand>
</feature>
<reference key="1">
    <citation type="journal article" date="2007" name="Science">
        <title>Genome sequence of Aedes aegypti, a major arbovirus vector.</title>
        <authorList>
            <person name="Nene V."/>
            <person name="Wortman J.R."/>
            <person name="Lawson D."/>
            <person name="Haas B.J."/>
            <person name="Kodira C.D."/>
            <person name="Tu Z.J."/>
            <person name="Loftus B.J."/>
            <person name="Xi Z."/>
            <person name="Megy K."/>
            <person name="Grabherr M."/>
            <person name="Ren Q."/>
            <person name="Zdobnov E.M."/>
            <person name="Lobo N.F."/>
            <person name="Campbell K.S."/>
            <person name="Brown S.E."/>
            <person name="Bonaldo M.F."/>
            <person name="Zhu J."/>
            <person name="Sinkins S.P."/>
            <person name="Hogenkamp D.G."/>
            <person name="Amedeo P."/>
            <person name="Arensburger P."/>
            <person name="Atkinson P.W."/>
            <person name="Bidwell S.L."/>
            <person name="Biedler J."/>
            <person name="Birney E."/>
            <person name="Bruggner R.V."/>
            <person name="Costas J."/>
            <person name="Coy M.R."/>
            <person name="Crabtree J."/>
            <person name="Crawford M."/>
            <person name="DeBruyn B."/>
            <person name="DeCaprio D."/>
            <person name="Eiglmeier K."/>
            <person name="Eisenstadt E."/>
            <person name="El-Dorry H."/>
            <person name="Gelbart W.M."/>
            <person name="Gomes S.L."/>
            <person name="Hammond M."/>
            <person name="Hannick L.I."/>
            <person name="Hogan J.R."/>
            <person name="Holmes M.H."/>
            <person name="Jaffe D."/>
            <person name="Johnston S.J."/>
            <person name="Kennedy R.C."/>
            <person name="Koo H."/>
            <person name="Kravitz S."/>
            <person name="Kriventseva E.V."/>
            <person name="Kulp D."/>
            <person name="Labutti K."/>
            <person name="Lee E."/>
            <person name="Li S."/>
            <person name="Lovin D.D."/>
            <person name="Mao C."/>
            <person name="Mauceli E."/>
            <person name="Menck C.F."/>
            <person name="Miller J.R."/>
            <person name="Montgomery P."/>
            <person name="Mori A."/>
            <person name="Nascimento A.L."/>
            <person name="Naveira H.F."/>
            <person name="Nusbaum C."/>
            <person name="O'Leary S.B."/>
            <person name="Orvis J."/>
            <person name="Pertea M."/>
            <person name="Quesneville H."/>
            <person name="Reidenbach K.R."/>
            <person name="Rogers Y.-H.C."/>
            <person name="Roth C.W."/>
            <person name="Schneider J.R."/>
            <person name="Schatz M."/>
            <person name="Shumway M."/>
            <person name="Stanke M."/>
            <person name="Stinson E.O."/>
            <person name="Tubio J.M.C."/>
            <person name="Vanzee J.P."/>
            <person name="Verjovski-Almeida S."/>
            <person name="Werner D."/>
            <person name="White O.R."/>
            <person name="Wyder S."/>
            <person name="Zeng Q."/>
            <person name="Zhao Q."/>
            <person name="Zhao Y."/>
            <person name="Hill C.A."/>
            <person name="Raikhel A.S."/>
            <person name="Soares M.B."/>
            <person name="Knudson D.L."/>
            <person name="Lee N.H."/>
            <person name="Galagan J."/>
            <person name="Salzberg S.L."/>
            <person name="Paulsen I.T."/>
            <person name="Dimopoulos G."/>
            <person name="Collins F.H."/>
            <person name="Bruce B."/>
            <person name="Fraser-Liggett C.M."/>
            <person name="Severson D.W."/>
        </authorList>
    </citation>
    <scope>NUCLEOTIDE SEQUENCE [LARGE SCALE GENOMIC DNA]</scope>
    <source>
        <strain>LVPib12</strain>
    </source>
</reference>
<organism>
    <name type="scientific">Aedes aegypti</name>
    <name type="common">Yellowfever mosquito</name>
    <name type="synonym">Culex aegypti</name>
    <dbReference type="NCBI Taxonomy" id="7159"/>
    <lineage>
        <taxon>Eukaryota</taxon>
        <taxon>Metazoa</taxon>
        <taxon>Ecdysozoa</taxon>
        <taxon>Arthropoda</taxon>
        <taxon>Hexapoda</taxon>
        <taxon>Insecta</taxon>
        <taxon>Pterygota</taxon>
        <taxon>Neoptera</taxon>
        <taxon>Endopterygota</taxon>
        <taxon>Diptera</taxon>
        <taxon>Nematocera</taxon>
        <taxon>Culicoidea</taxon>
        <taxon>Culicidae</taxon>
        <taxon>Culicinae</taxon>
        <taxon>Aedini</taxon>
        <taxon>Aedes</taxon>
        <taxon>Stegomyia</taxon>
    </lineage>
</organism>
<comment type="function">
    <text evidence="1">Component of the cytosolic iron-sulfur (Fe/S) protein assembly machinery. Required for maturation of extramitochondrial Fe/S proteins (By similarity).</text>
</comment>
<comment type="similarity">
    <text evidence="3">Belongs to the NARF family.</text>
</comment>
<dbReference type="EMBL" id="CH477858">
    <property type="protein sequence ID" value="EAT35578.1"/>
    <property type="molecule type" value="Genomic_DNA"/>
</dbReference>
<dbReference type="SMR" id="Q16ML2"/>
<dbReference type="FunCoup" id="Q16ML2">
    <property type="interactions" value="494"/>
</dbReference>
<dbReference type="STRING" id="7159.Q16ML2"/>
<dbReference type="PaxDb" id="7159-AAEL012261-PA"/>
<dbReference type="EnsemblMetazoa" id="AAEL012261-RA">
    <property type="protein sequence ID" value="AAEL012261-PA"/>
    <property type="gene ID" value="AAEL012261"/>
</dbReference>
<dbReference type="GeneID" id="5576033"/>
<dbReference type="KEGG" id="aag:5576033"/>
<dbReference type="VEuPathDB" id="VectorBase:AAEL012261"/>
<dbReference type="eggNOG" id="KOG2439">
    <property type="taxonomic scope" value="Eukaryota"/>
</dbReference>
<dbReference type="HOGENOM" id="CLU_018240_0_0_1"/>
<dbReference type="InParanoid" id="Q16ML2"/>
<dbReference type="OMA" id="GYLHHVL"/>
<dbReference type="OrthoDB" id="10253113at2759"/>
<dbReference type="PhylomeDB" id="Q16ML2"/>
<dbReference type="Proteomes" id="UP000008820">
    <property type="component" value="Chromosome 2"/>
</dbReference>
<dbReference type="Proteomes" id="UP000682892">
    <property type="component" value="Chromosome 1"/>
</dbReference>
<dbReference type="GO" id="GO:0051539">
    <property type="term" value="F:4 iron, 4 sulfur cluster binding"/>
    <property type="evidence" value="ECO:0007669"/>
    <property type="project" value="UniProtKB-KW"/>
</dbReference>
<dbReference type="GO" id="GO:0046872">
    <property type="term" value="F:metal ion binding"/>
    <property type="evidence" value="ECO:0007669"/>
    <property type="project" value="UniProtKB-KW"/>
</dbReference>
<dbReference type="GO" id="GO:0016226">
    <property type="term" value="P:iron-sulfur cluster assembly"/>
    <property type="evidence" value="ECO:0000250"/>
    <property type="project" value="UniProtKB"/>
</dbReference>
<dbReference type="Gene3D" id="3.40.50.1780">
    <property type="match status" value="1"/>
</dbReference>
<dbReference type="Gene3D" id="3.40.950.10">
    <property type="entry name" value="Fe-only Hydrogenase (Larger Subunit), Chain L, domain 3"/>
    <property type="match status" value="1"/>
</dbReference>
<dbReference type="InterPro" id="IPR050340">
    <property type="entry name" value="Cytosolic_Fe-S_CAF"/>
</dbReference>
<dbReference type="InterPro" id="IPR009016">
    <property type="entry name" value="Fe_hydrogenase"/>
</dbReference>
<dbReference type="InterPro" id="IPR004108">
    <property type="entry name" value="Fe_hydrogenase_lsu_C"/>
</dbReference>
<dbReference type="InterPro" id="IPR003149">
    <property type="entry name" value="Fe_hydrogenase_ssu"/>
</dbReference>
<dbReference type="PANTHER" id="PTHR11615">
    <property type="entry name" value="NITRATE, FORMATE, IRON DEHYDROGENASE"/>
    <property type="match status" value="1"/>
</dbReference>
<dbReference type="Pfam" id="PF02906">
    <property type="entry name" value="Fe_hyd_lg_C"/>
    <property type="match status" value="1"/>
</dbReference>
<dbReference type="SMART" id="SM00902">
    <property type="entry name" value="Fe_hyd_SSU"/>
    <property type="match status" value="1"/>
</dbReference>
<dbReference type="SUPFAM" id="SSF53920">
    <property type="entry name" value="Fe-only hydrogenase"/>
    <property type="match status" value="1"/>
</dbReference>
<name>NARF_AEDAE</name>
<proteinExistence type="inferred from homology"/>
<accession>Q16ML2</accession>
<evidence type="ECO:0000250" key="1"/>
<evidence type="ECO:0000255" key="2"/>
<evidence type="ECO:0000305" key="3"/>
<keyword id="KW-0004">4Fe-4S</keyword>
<keyword id="KW-0408">Iron</keyword>
<keyword id="KW-0411">Iron-sulfur</keyword>
<keyword id="KW-0479">Metal-binding</keyword>
<keyword id="KW-1185">Reference proteome</keyword>
<gene>
    <name type="ORF">AAEL012261</name>
</gene>
<protein>
    <recommendedName>
        <fullName>Probable cytosolic Fe-S cluster assembly factor AAEL012261</fullName>
    </recommendedName>
</protein>
<sequence length="478" mass="53902">MSRFSGALQLTDLDDFITPSQECIKPVKIETNKSKTGSKITIQDDGSYMQATSSGLQKLEKVEITLADCLACSGCITSAEGVLITQQSQEELLKVMNENNLAKLNNQLDSVRYIVFTVAQQPILSLAKRYNLGPEETFERVAGYFKKLGADMVVDTKIADDLSLIESRNEFVERFNTNRQSMPMMASSCPGWVCYAEKTHGNFILPFIATTRSPQQIMGVLVKKYLAKILGVPGDRIYHVTVMPCYDKKLEASREDFFSDVDNCRDVDCVITSIEIEQMLDGTGIQFLQTVEPSPIDWPWPTPRPSAFVWAHESSGSGGYSEYIFKYAARKLFNINIDQAEFKILRNNDLREAILEINGEVLLRFAIANGFRNIQNMVQKLKRGKCNYHFIEIMACPSGCLNGGAQVRPNSGQTPRELTAELEAMYKMLPQSNPENEAVEMVYTTFLDNAGDNNKRKEFLHTSYHQIEKMNTALNIKW</sequence>